<comment type="function">
    <text evidence="1">Mediates tetrahydrobiopterin inhibition of GTP cyclohydrolase 1. This inhibition is reversed by L-phenylalanine (By similarity).</text>
</comment>
<comment type="subunit">
    <text evidence="1">Homopentamer. Forms a complex with GCH1 where a GCH1 homodecamer is sandwiched by two GFRP homopentamers. Interacts with GCH1 (By similarity).</text>
</comment>
<comment type="subcellular location">
    <subcellularLocation>
        <location evidence="1">Nucleus</location>
    </subcellularLocation>
    <subcellularLocation>
        <location evidence="1">Nucleus membrane</location>
    </subcellularLocation>
    <subcellularLocation>
        <location evidence="1">Cytoplasm</location>
        <location evidence="1">Cytosol</location>
    </subcellularLocation>
</comment>
<comment type="similarity">
    <text evidence="3">Belongs to the GFRP family.</text>
</comment>
<sequence>MPYLLISTQIRMEVGPTMVGDEHSDPELMQHLGASKRSVLGNNFYEYYVNDPPRIVLDKLECKGFRVLSMTGVGQTLVWCLHKE</sequence>
<protein>
    <recommendedName>
        <fullName>GTP cyclohydrolase 1 feedback regulatory protein</fullName>
        <shortName>GFRP</shortName>
    </recommendedName>
    <alternativeName>
        <fullName>GTP cyclohydrolase I feedback regulatory protein</fullName>
    </alternativeName>
    <alternativeName>
        <fullName>p35</fullName>
    </alternativeName>
</protein>
<organism>
    <name type="scientific">Mus musculus</name>
    <name type="common">Mouse</name>
    <dbReference type="NCBI Taxonomy" id="10090"/>
    <lineage>
        <taxon>Eukaryota</taxon>
        <taxon>Metazoa</taxon>
        <taxon>Chordata</taxon>
        <taxon>Craniata</taxon>
        <taxon>Vertebrata</taxon>
        <taxon>Euteleostomi</taxon>
        <taxon>Mammalia</taxon>
        <taxon>Eutheria</taxon>
        <taxon>Euarchontoglires</taxon>
        <taxon>Glires</taxon>
        <taxon>Rodentia</taxon>
        <taxon>Myomorpha</taxon>
        <taxon>Muroidea</taxon>
        <taxon>Muridae</taxon>
        <taxon>Murinae</taxon>
        <taxon>Mus</taxon>
        <taxon>Mus</taxon>
    </lineage>
</organism>
<dbReference type="EMBL" id="AK028116">
    <property type="protein sequence ID" value="BAC25756.1"/>
    <property type="molecule type" value="mRNA"/>
</dbReference>
<dbReference type="EMBL" id="AK028122">
    <property type="protein sequence ID" value="BAC25761.1"/>
    <property type="molecule type" value="mRNA"/>
</dbReference>
<dbReference type="CCDS" id="CCDS38204.1"/>
<dbReference type="RefSeq" id="NP_796131.1">
    <property type="nucleotide sequence ID" value="NM_177157.4"/>
</dbReference>
<dbReference type="SMR" id="P99025"/>
<dbReference type="FunCoup" id="P99025">
    <property type="interactions" value="309"/>
</dbReference>
<dbReference type="STRING" id="10090.ENSMUSP00000060835"/>
<dbReference type="GlyGen" id="P99025">
    <property type="glycosylation" value="1 site"/>
</dbReference>
<dbReference type="iPTMnet" id="P99025"/>
<dbReference type="PhosphoSitePlus" id="P99025"/>
<dbReference type="SwissPalm" id="P99025"/>
<dbReference type="jPOST" id="P99025"/>
<dbReference type="PaxDb" id="10090-ENSMUSP00000060835"/>
<dbReference type="PeptideAtlas" id="P99025"/>
<dbReference type="ProteomicsDB" id="263359"/>
<dbReference type="Pumba" id="P99025"/>
<dbReference type="Antibodypedia" id="23158">
    <property type="antibodies" value="243 antibodies from 30 providers"/>
</dbReference>
<dbReference type="DNASU" id="320415"/>
<dbReference type="Ensembl" id="ENSMUST00000057454.4">
    <property type="protein sequence ID" value="ENSMUSP00000060835.4"/>
    <property type="gene ID" value="ENSMUSG00000046814.4"/>
</dbReference>
<dbReference type="GeneID" id="320415"/>
<dbReference type="KEGG" id="mmu:320415"/>
<dbReference type="UCSC" id="uc008ltf.1">
    <property type="organism name" value="mouse"/>
</dbReference>
<dbReference type="AGR" id="MGI:2443977"/>
<dbReference type="CTD" id="2644"/>
<dbReference type="MGI" id="MGI:2443977">
    <property type="gene designation" value="Gchfr"/>
</dbReference>
<dbReference type="VEuPathDB" id="HostDB:ENSMUSG00000046814"/>
<dbReference type="eggNOG" id="ENOG502S4A0">
    <property type="taxonomic scope" value="Eukaryota"/>
</dbReference>
<dbReference type="GeneTree" id="ENSGT00440000033849"/>
<dbReference type="HOGENOM" id="CLU_195651_0_0_1"/>
<dbReference type="InParanoid" id="P99025"/>
<dbReference type="OMA" id="PNLMHYL"/>
<dbReference type="OrthoDB" id="64291at2759"/>
<dbReference type="PhylomeDB" id="P99025"/>
<dbReference type="TreeFam" id="TF329303"/>
<dbReference type="Reactome" id="R-MMU-1474151">
    <property type="pathway name" value="Tetrahydrobiopterin (BH4) synthesis, recycling, salvage and regulation"/>
</dbReference>
<dbReference type="BioGRID-ORCS" id="320415">
    <property type="hits" value="0 hits in 73 CRISPR screens"/>
</dbReference>
<dbReference type="ChiTaRS" id="Gchfr">
    <property type="organism name" value="mouse"/>
</dbReference>
<dbReference type="PRO" id="PR:P99025"/>
<dbReference type="Proteomes" id="UP000000589">
    <property type="component" value="Chromosome 2"/>
</dbReference>
<dbReference type="RNAct" id="P99025">
    <property type="molecule type" value="protein"/>
</dbReference>
<dbReference type="Bgee" id="ENSMUSG00000046814">
    <property type="expression patterns" value="Expressed in right kidney and 126 other cell types or tissues"/>
</dbReference>
<dbReference type="ExpressionAtlas" id="P99025">
    <property type="expression patterns" value="baseline and differential"/>
</dbReference>
<dbReference type="GO" id="GO:0005829">
    <property type="term" value="C:cytosol"/>
    <property type="evidence" value="ECO:0007669"/>
    <property type="project" value="UniProtKB-SubCell"/>
</dbReference>
<dbReference type="GO" id="GO:0030425">
    <property type="term" value="C:dendrite"/>
    <property type="evidence" value="ECO:0007669"/>
    <property type="project" value="Ensembl"/>
</dbReference>
<dbReference type="GO" id="GO:0042470">
    <property type="term" value="C:melanosome"/>
    <property type="evidence" value="ECO:0007669"/>
    <property type="project" value="Ensembl"/>
</dbReference>
<dbReference type="GO" id="GO:0031965">
    <property type="term" value="C:nuclear membrane"/>
    <property type="evidence" value="ECO:0007669"/>
    <property type="project" value="UniProtKB-SubCell"/>
</dbReference>
<dbReference type="GO" id="GO:0005654">
    <property type="term" value="C:nucleoplasm"/>
    <property type="evidence" value="ECO:0007669"/>
    <property type="project" value="Ensembl"/>
</dbReference>
<dbReference type="GO" id="GO:0004857">
    <property type="term" value="F:enzyme inhibitor activity"/>
    <property type="evidence" value="ECO:0000314"/>
    <property type="project" value="MGI"/>
</dbReference>
<dbReference type="GO" id="GO:0060308">
    <property type="term" value="F:GTP cyclohydrolase I regulator activity"/>
    <property type="evidence" value="ECO:0000314"/>
    <property type="project" value="MGI"/>
</dbReference>
<dbReference type="GO" id="GO:0009890">
    <property type="term" value="P:negative regulation of biosynthetic process"/>
    <property type="evidence" value="ECO:0007669"/>
    <property type="project" value="InterPro"/>
</dbReference>
<dbReference type="GO" id="GO:0062014">
    <property type="term" value="P:negative regulation of small molecule metabolic process"/>
    <property type="evidence" value="ECO:0000314"/>
    <property type="project" value="MGI"/>
</dbReference>
<dbReference type="FunFam" id="3.30.1410.10:FF:000001">
    <property type="entry name" value="GTP cyclohydrolase 1 feedback regulatory protein"/>
    <property type="match status" value="1"/>
</dbReference>
<dbReference type="Gene3D" id="3.30.1410.10">
    <property type="entry name" value="GTP cyclohydrolase I feedback regulatory protein GFRP"/>
    <property type="match status" value="1"/>
</dbReference>
<dbReference type="InterPro" id="IPR036717">
    <property type="entry name" value="GFRP_sf"/>
</dbReference>
<dbReference type="InterPro" id="IPR009112">
    <property type="entry name" value="GTP_CycHdrlase_I_reg"/>
</dbReference>
<dbReference type="PANTHER" id="PTHR16852">
    <property type="entry name" value="GTP CYCLOHYDROLASE 1 FEEDBACK REGULATORY PROTEIN"/>
    <property type="match status" value="1"/>
</dbReference>
<dbReference type="PANTHER" id="PTHR16852:SF2">
    <property type="entry name" value="GTP CYCLOHYDROLASE 1 FEEDBACK REGULATORY PROTEIN"/>
    <property type="match status" value="1"/>
</dbReference>
<dbReference type="Pfam" id="PF06399">
    <property type="entry name" value="GFRP"/>
    <property type="match status" value="1"/>
</dbReference>
<dbReference type="SUPFAM" id="SSF69761">
    <property type="entry name" value="GTP cyclohydrolase I feedback regulatory protein, GFRP"/>
    <property type="match status" value="1"/>
</dbReference>
<accession>P99025</accession>
<accession>Q8BH29</accession>
<proteinExistence type="evidence at protein level"/>
<evidence type="ECO:0000250" key="1"/>
<evidence type="ECO:0000269" key="2">
    <source ref="2"/>
</evidence>
<evidence type="ECO:0000305" key="3"/>
<keyword id="KW-0963">Cytoplasm</keyword>
<keyword id="KW-0903">Direct protein sequencing</keyword>
<keyword id="KW-0472">Membrane</keyword>
<keyword id="KW-0539">Nucleus</keyword>
<keyword id="KW-1185">Reference proteome</keyword>
<feature type="initiator methionine" description="Removed" evidence="2">
    <location>
        <position position="1"/>
    </location>
</feature>
<feature type="chain" id="PRO_0000189676" description="GTP cyclohydrolase 1 feedback regulatory protein">
    <location>
        <begin position="2"/>
        <end position="84"/>
    </location>
</feature>
<gene>
    <name type="primary">Gchfr</name>
    <name type="synonym">Gfrp</name>
</gene>
<reference key="1">
    <citation type="journal article" date="2005" name="Science">
        <title>The transcriptional landscape of the mammalian genome.</title>
        <authorList>
            <person name="Carninci P."/>
            <person name="Kasukawa T."/>
            <person name="Katayama S."/>
            <person name="Gough J."/>
            <person name="Frith M.C."/>
            <person name="Maeda N."/>
            <person name="Oyama R."/>
            <person name="Ravasi T."/>
            <person name="Lenhard B."/>
            <person name="Wells C."/>
            <person name="Kodzius R."/>
            <person name="Shimokawa K."/>
            <person name="Bajic V.B."/>
            <person name="Brenner S.E."/>
            <person name="Batalov S."/>
            <person name="Forrest A.R."/>
            <person name="Zavolan M."/>
            <person name="Davis M.J."/>
            <person name="Wilming L.G."/>
            <person name="Aidinis V."/>
            <person name="Allen J.E."/>
            <person name="Ambesi-Impiombato A."/>
            <person name="Apweiler R."/>
            <person name="Aturaliya R.N."/>
            <person name="Bailey T.L."/>
            <person name="Bansal M."/>
            <person name="Baxter L."/>
            <person name="Beisel K.W."/>
            <person name="Bersano T."/>
            <person name="Bono H."/>
            <person name="Chalk A.M."/>
            <person name="Chiu K.P."/>
            <person name="Choudhary V."/>
            <person name="Christoffels A."/>
            <person name="Clutterbuck D.R."/>
            <person name="Crowe M.L."/>
            <person name="Dalla E."/>
            <person name="Dalrymple B.P."/>
            <person name="de Bono B."/>
            <person name="Della Gatta G."/>
            <person name="di Bernardo D."/>
            <person name="Down T."/>
            <person name="Engstrom P."/>
            <person name="Fagiolini M."/>
            <person name="Faulkner G."/>
            <person name="Fletcher C.F."/>
            <person name="Fukushima T."/>
            <person name="Furuno M."/>
            <person name="Futaki S."/>
            <person name="Gariboldi M."/>
            <person name="Georgii-Hemming P."/>
            <person name="Gingeras T.R."/>
            <person name="Gojobori T."/>
            <person name="Green R.E."/>
            <person name="Gustincich S."/>
            <person name="Harbers M."/>
            <person name="Hayashi Y."/>
            <person name="Hensch T.K."/>
            <person name="Hirokawa N."/>
            <person name="Hill D."/>
            <person name="Huminiecki L."/>
            <person name="Iacono M."/>
            <person name="Ikeo K."/>
            <person name="Iwama A."/>
            <person name="Ishikawa T."/>
            <person name="Jakt M."/>
            <person name="Kanapin A."/>
            <person name="Katoh M."/>
            <person name="Kawasawa Y."/>
            <person name="Kelso J."/>
            <person name="Kitamura H."/>
            <person name="Kitano H."/>
            <person name="Kollias G."/>
            <person name="Krishnan S.P."/>
            <person name="Kruger A."/>
            <person name="Kummerfeld S.K."/>
            <person name="Kurochkin I.V."/>
            <person name="Lareau L.F."/>
            <person name="Lazarevic D."/>
            <person name="Lipovich L."/>
            <person name="Liu J."/>
            <person name="Liuni S."/>
            <person name="McWilliam S."/>
            <person name="Madan Babu M."/>
            <person name="Madera M."/>
            <person name="Marchionni L."/>
            <person name="Matsuda H."/>
            <person name="Matsuzawa S."/>
            <person name="Miki H."/>
            <person name="Mignone F."/>
            <person name="Miyake S."/>
            <person name="Morris K."/>
            <person name="Mottagui-Tabar S."/>
            <person name="Mulder N."/>
            <person name="Nakano N."/>
            <person name="Nakauchi H."/>
            <person name="Ng P."/>
            <person name="Nilsson R."/>
            <person name="Nishiguchi S."/>
            <person name="Nishikawa S."/>
            <person name="Nori F."/>
            <person name="Ohara O."/>
            <person name="Okazaki Y."/>
            <person name="Orlando V."/>
            <person name="Pang K.C."/>
            <person name="Pavan W.J."/>
            <person name="Pavesi G."/>
            <person name="Pesole G."/>
            <person name="Petrovsky N."/>
            <person name="Piazza S."/>
            <person name="Reed J."/>
            <person name="Reid J.F."/>
            <person name="Ring B.Z."/>
            <person name="Ringwald M."/>
            <person name="Rost B."/>
            <person name="Ruan Y."/>
            <person name="Salzberg S.L."/>
            <person name="Sandelin A."/>
            <person name="Schneider C."/>
            <person name="Schoenbach C."/>
            <person name="Sekiguchi K."/>
            <person name="Semple C.A."/>
            <person name="Seno S."/>
            <person name="Sessa L."/>
            <person name="Sheng Y."/>
            <person name="Shibata Y."/>
            <person name="Shimada H."/>
            <person name="Shimada K."/>
            <person name="Silva D."/>
            <person name="Sinclair B."/>
            <person name="Sperling S."/>
            <person name="Stupka E."/>
            <person name="Sugiura K."/>
            <person name="Sultana R."/>
            <person name="Takenaka Y."/>
            <person name="Taki K."/>
            <person name="Tammoja K."/>
            <person name="Tan S.L."/>
            <person name="Tang S."/>
            <person name="Taylor M.S."/>
            <person name="Tegner J."/>
            <person name="Teichmann S.A."/>
            <person name="Ueda H.R."/>
            <person name="van Nimwegen E."/>
            <person name="Verardo R."/>
            <person name="Wei C.L."/>
            <person name="Yagi K."/>
            <person name="Yamanishi H."/>
            <person name="Zabarovsky E."/>
            <person name="Zhu S."/>
            <person name="Zimmer A."/>
            <person name="Hide W."/>
            <person name="Bult C."/>
            <person name="Grimmond S.M."/>
            <person name="Teasdale R.D."/>
            <person name="Liu E.T."/>
            <person name="Brusic V."/>
            <person name="Quackenbush J."/>
            <person name="Wahlestedt C."/>
            <person name="Mattick J.S."/>
            <person name="Hume D.A."/>
            <person name="Kai C."/>
            <person name="Sasaki D."/>
            <person name="Tomaru Y."/>
            <person name="Fukuda S."/>
            <person name="Kanamori-Katayama M."/>
            <person name="Suzuki M."/>
            <person name="Aoki J."/>
            <person name="Arakawa T."/>
            <person name="Iida J."/>
            <person name="Imamura K."/>
            <person name="Itoh M."/>
            <person name="Kato T."/>
            <person name="Kawaji H."/>
            <person name="Kawagashira N."/>
            <person name="Kawashima T."/>
            <person name="Kojima M."/>
            <person name="Kondo S."/>
            <person name="Konno H."/>
            <person name="Nakano K."/>
            <person name="Ninomiya N."/>
            <person name="Nishio T."/>
            <person name="Okada M."/>
            <person name="Plessy C."/>
            <person name="Shibata K."/>
            <person name="Shiraki T."/>
            <person name="Suzuki S."/>
            <person name="Tagami M."/>
            <person name="Waki K."/>
            <person name="Watahiki A."/>
            <person name="Okamura-Oho Y."/>
            <person name="Suzuki H."/>
            <person name="Kawai J."/>
            <person name="Hayashizaki Y."/>
        </authorList>
    </citation>
    <scope>NUCLEOTIDE SEQUENCE [LARGE SCALE MRNA]</scope>
    <source>
        <strain>C57BL/6J</strain>
        <tissue>Small intestine</tissue>
    </source>
</reference>
<reference key="2">
    <citation type="submission" date="1998-08" db="UniProtKB">
        <authorList>
            <person name="Sanchez J.-C."/>
            <person name="Rouge V."/>
            <person name="Frutiger S."/>
            <person name="Hughes G."/>
            <person name="Yan J.X."/>
            <person name="Hoogland C."/>
            <person name="Appel R.D."/>
            <person name="Binz P.-A."/>
            <person name="Hochstrasser D.F."/>
            <person name="Cowthorne M."/>
        </authorList>
    </citation>
    <scope>PROTEIN SEQUENCE OF 2-8</scope>
    <source>
        <tissue>Liver</tissue>
    </source>
</reference>
<reference key="3">
    <citation type="journal article" date="2010" name="Cell">
        <title>A tissue-specific atlas of mouse protein phosphorylation and expression.</title>
        <authorList>
            <person name="Huttlin E.L."/>
            <person name="Jedrychowski M.P."/>
            <person name="Elias J.E."/>
            <person name="Goswami T."/>
            <person name="Rad R."/>
            <person name="Beausoleil S.A."/>
            <person name="Villen J."/>
            <person name="Haas W."/>
            <person name="Sowa M.E."/>
            <person name="Gygi S.P."/>
        </authorList>
    </citation>
    <scope>IDENTIFICATION BY MASS SPECTROMETRY [LARGE SCALE ANALYSIS]</scope>
    <source>
        <tissue>Brain</tissue>
        <tissue>Brown adipose tissue</tissue>
        <tissue>Kidney</tissue>
        <tissue>Liver</tissue>
    </source>
</reference>
<name>GFRP_MOUSE</name>